<keyword id="KW-0456">Lyase</keyword>
<keyword id="KW-0663">Pyridoxal phosphate</keyword>
<comment type="catalytic activity">
    <reaction evidence="1">
        <text>D-serine = pyruvate + NH4(+)</text>
        <dbReference type="Rhea" id="RHEA:13977"/>
        <dbReference type="ChEBI" id="CHEBI:15361"/>
        <dbReference type="ChEBI" id="CHEBI:28938"/>
        <dbReference type="ChEBI" id="CHEBI:35247"/>
        <dbReference type="EC" id="4.3.1.18"/>
    </reaction>
</comment>
<comment type="cofactor">
    <cofactor evidence="1">
        <name>pyridoxal 5'-phosphate</name>
        <dbReference type="ChEBI" id="CHEBI:597326"/>
    </cofactor>
</comment>
<comment type="similarity">
    <text evidence="1">Belongs to the serine/threonine dehydratase family. DsdA subfamily.</text>
</comment>
<sequence>MVTLSLTPELLAKLQSRQPLLWVNPRLGQPLPASAPSLELIAAAEARLARCAPLMAALFPELASSHGQVESQLMPATGLQYALGEGAEGAWFIKRDDQLPTAGSIKARGGFHEVLAIAESIAIEHGMLDPDGDRRVLATEAARKLFSQYSVTVGSTGNLGLSIGVMAAALGFDAVVHMSADAKAWKKDRLRKRGVRVVEHEGDYAQAVAAGREQALGATRCHFVDDERSALLFFGYAAAARHLARQLAEAGRVVDAAHPLFVYLPCGVGGAPGGITYGLKALLGDHVHCFFAEPVASPCVLVQLASGSDDPVSVYDIGLDNRTDADGLAVGQASHLVSPLMASQLAGVFTVPDDQLYVQLLALKTSMGVEVEPSAAAGIGGPGWLRDSPEGRAYVRDHGLDMRDATHVIWATGGSLVPREELHRFQAYATALAHVPGAMHKAA</sequence>
<feature type="chain" id="PRO_0000291738" description="Probable D-serine dehydratase">
    <location>
        <begin position="1"/>
        <end position="443"/>
    </location>
</feature>
<feature type="modified residue" description="N6-(pyridoxal phosphate)lysine" evidence="1">
    <location>
        <position position="106"/>
    </location>
</feature>
<dbReference type="EC" id="4.3.1.18" evidence="1"/>
<dbReference type="EMBL" id="CP000090">
    <property type="protein sequence ID" value="AAZ62275.1"/>
    <property type="molecule type" value="Genomic_DNA"/>
</dbReference>
<dbReference type="SMR" id="Q46X58"/>
<dbReference type="STRING" id="264198.Reut_A2915"/>
<dbReference type="KEGG" id="reu:Reut_A2915"/>
<dbReference type="eggNOG" id="COG3048">
    <property type="taxonomic scope" value="Bacteria"/>
</dbReference>
<dbReference type="HOGENOM" id="CLU_035707_0_0_4"/>
<dbReference type="OrthoDB" id="9780546at2"/>
<dbReference type="GO" id="GO:0008721">
    <property type="term" value="F:D-serine ammonia-lyase activity"/>
    <property type="evidence" value="ECO:0007669"/>
    <property type="project" value="UniProtKB-EC"/>
</dbReference>
<dbReference type="GO" id="GO:0016836">
    <property type="term" value="F:hydro-lyase activity"/>
    <property type="evidence" value="ECO:0007669"/>
    <property type="project" value="UniProtKB-UniRule"/>
</dbReference>
<dbReference type="GO" id="GO:0030170">
    <property type="term" value="F:pyridoxal phosphate binding"/>
    <property type="evidence" value="ECO:0007669"/>
    <property type="project" value="InterPro"/>
</dbReference>
<dbReference type="GO" id="GO:0036088">
    <property type="term" value="P:D-serine catabolic process"/>
    <property type="evidence" value="ECO:0007669"/>
    <property type="project" value="TreeGrafter"/>
</dbReference>
<dbReference type="GO" id="GO:0009097">
    <property type="term" value="P:isoleucine biosynthetic process"/>
    <property type="evidence" value="ECO:0007669"/>
    <property type="project" value="TreeGrafter"/>
</dbReference>
<dbReference type="CDD" id="cd06447">
    <property type="entry name" value="D-Ser-dehyd"/>
    <property type="match status" value="1"/>
</dbReference>
<dbReference type="Gene3D" id="3.40.50.1100">
    <property type="match status" value="2"/>
</dbReference>
<dbReference type="HAMAP" id="MF_01030">
    <property type="entry name" value="D_Ser_dehydrat"/>
    <property type="match status" value="1"/>
</dbReference>
<dbReference type="InterPro" id="IPR011780">
    <property type="entry name" value="D_Ser_am_lyase"/>
</dbReference>
<dbReference type="InterPro" id="IPR050147">
    <property type="entry name" value="Ser/Thr_Dehydratase"/>
</dbReference>
<dbReference type="InterPro" id="IPR001926">
    <property type="entry name" value="TrpB-like_PALP"/>
</dbReference>
<dbReference type="InterPro" id="IPR036052">
    <property type="entry name" value="TrpB-like_PALP_sf"/>
</dbReference>
<dbReference type="NCBIfam" id="TIGR02035">
    <property type="entry name" value="D_Ser_am_lyase"/>
    <property type="match status" value="1"/>
</dbReference>
<dbReference type="NCBIfam" id="NF002823">
    <property type="entry name" value="PRK02991.1"/>
    <property type="match status" value="1"/>
</dbReference>
<dbReference type="PANTHER" id="PTHR48078:SF9">
    <property type="entry name" value="D-SERINE DEHYDRATASE"/>
    <property type="match status" value="1"/>
</dbReference>
<dbReference type="PANTHER" id="PTHR48078">
    <property type="entry name" value="THREONINE DEHYDRATASE, MITOCHONDRIAL-RELATED"/>
    <property type="match status" value="1"/>
</dbReference>
<dbReference type="Pfam" id="PF00291">
    <property type="entry name" value="PALP"/>
    <property type="match status" value="1"/>
</dbReference>
<dbReference type="SUPFAM" id="SSF53686">
    <property type="entry name" value="Tryptophan synthase beta subunit-like PLP-dependent enzymes"/>
    <property type="match status" value="1"/>
</dbReference>
<organism>
    <name type="scientific">Cupriavidus pinatubonensis (strain JMP 134 / LMG 1197)</name>
    <name type="common">Cupriavidus necator (strain JMP 134)</name>
    <dbReference type="NCBI Taxonomy" id="264198"/>
    <lineage>
        <taxon>Bacteria</taxon>
        <taxon>Pseudomonadati</taxon>
        <taxon>Pseudomonadota</taxon>
        <taxon>Betaproteobacteria</taxon>
        <taxon>Burkholderiales</taxon>
        <taxon>Burkholderiaceae</taxon>
        <taxon>Cupriavidus</taxon>
    </lineage>
</organism>
<proteinExistence type="inferred from homology"/>
<evidence type="ECO:0000255" key="1">
    <source>
        <dbReference type="HAMAP-Rule" id="MF_01030"/>
    </source>
</evidence>
<reference key="1">
    <citation type="journal article" date="2010" name="PLoS ONE">
        <title>The complete multipartite genome sequence of Cupriavidus necator JMP134, a versatile pollutant degrader.</title>
        <authorList>
            <person name="Lykidis A."/>
            <person name="Perez-Pantoja D."/>
            <person name="Ledger T."/>
            <person name="Mavromatis K."/>
            <person name="Anderson I.J."/>
            <person name="Ivanova N.N."/>
            <person name="Hooper S.D."/>
            <person name="Lapidus A."/>
            <person name="Lucas S."/>
            <person name="Gonzalez B."/>
            <person name="Kyrpides N.C."/>
        </authorList>
    </citation>
    <scope>NUCLEOTIDE SEQUENCE [LARGE SCALE GENOMIC DNA]</scope>
    <source>
        <strain>JMP134 / LMG 1197</strain>
    </source>
</reference>
<accession>Q46X58</accession>
<gene>
    <name evidence="1" type="primary">dsdA</name>
    <name type="ordered locus">Reut_A2915</name>
</gene>
<name>SDHD_CUPPJ</name>
<protein>
    <recommendedName>
        <fullName evidence="1">Probable D-serine dehydratase</fullName>
        <ecNumber evidence="1">4.3.1.18</ecNumber>
    </recommendedName>
    <alternativeName>
        <fullName evidence="1">D-serine deaminase</fullName>
        <shortName evidence="1">DSD</shortName>
    </alternativeName>
</protein>